<evidence type="ECO:0000256" key="1">
    <source>
        <dbReference type="SAM" id="MobiDB-lite"/>
    </source>
</evidence>
<evidence type="ECO:0000269" key="2">
    <source>
    </source>
</evidence>
<evidence type="ECO:0000269" key="3">
    <source>
    </source>
</evidence>
<evidence type="ECO:0000269" key="4">
    <source>
    </source>
</evidence>
<evidence type="ECO:0000303" key="5">
    <source>
    </source>
</evidence>
<evidence type="ECO:0000305" key="6"/>
<evidence type="ECO:0000312" key="7">
    <source>
        <dbReference type="Araport" id="AT3G13222"/>
    </source>
</evidence>
<accession>Q8VZS6</accession>
<accession>Q84U77</accession>
<accession>Q9LK49</accession>
<name>GIP1_ARATH</name>
<keyword id="KW-0143">Chaperone</keyword>
<keyword id="KW-0539">Nucleus</keyword>
<keyword id="KW-1185">Reference proteome</keyword>
<organism>
    <name type="scientific">Arabidopsis thaliana</name>
    <name type="common">Mouse-ear cress</name>
    <dbReference type="NCBI Taxonomy" id="3702"/>
    <lineage>
        <taxon>Eukaryota</taxon>
        <taxon>Viridiplantae</taxon>
        <taxon>Streptophyta</taxon>
        <taxon>Embryophyta</taxon>
        <taxon>Tracheophyta</taxon>
        <taxon>Spermatophyta</taxon>
        <taxon>Magnoliopsida</taxon>
        <taxon>eudicotyledons</taxon>
        <taxon>Gunneridae</taxon>
        <taxon>Pentapetalae</taxon>
        <taxon>rosids</taxon>
        <taxon>malvids</taxon>
        <taxon>Brassicales</taxon>
        <taxon>Brassicaceae</taxon>
        <taxon>Camelineae</taxon>
        <taxon>Arabidopsis</taxon>
    </lineage>
</organism>
<feature type="chain" id="PRO_0000435635" description="GBF-interacting protein 1">
    <location>
        <begin position="1"/>
        <end position="567"/>
    </location>
</feature>
<feature type="region of interest" description="Disordered" evidence="1">
    <location>
        <begin position="70"/>
        <end position="150"/>
    </location>
</feature>
<feature type="region of interest" description="Disordered" evidence="1">
    <location>
        <begin position="164"/>
        <end position="192"/>
    </location>
</feature>
<feature type="region of interest" description="Disordered" evidence="1">
    <location>
        <begin position="545"/>
        <end position="567"/>
    </location>
</feature>
<feature type="compositionally biased region" description="Polar residues" evidence="1">
    <location>
        <begin position="91"/>
        <end position="102"/>
    </location>
</feature>
<feature type="compositionally biased region" description="Polar residues" evidence="1">
    <location>
        <begin position="121"/>
        <end position="136"/>
    </location>
</feature>
<feature type="compositionally biased region" description="Basic and acidic residues" evidence="1">
    <location>
        <begin position="182"/>
        <end position="191"/>
    </location>
</feature>
<feature type="compositionally biased region" description="Polar residues" evidence="1">
    <location>
        <begin position="550"/>
        <end position="567"/>
    </location>
</feature>
<feature type="sequence conflict" description="In Ref. 4; AAO48724." evidence="6" ref="4">
    <original>AG</original>
    <variation>VDSRR</variation>
    <location>
        <begin position="521"/>
        <end position="522"/>
    </location>
</feature>
<dbReference type="EMBL" id="AP000375">
    <property type="protein sequence ID" value="BAB01415.1"/>
    <property type="status" value="ALT_SEQ"/>
    <property type="molecule type" value="Genomic_DNA"/>
</dbReference>
<dbReference type="EMBL" id="AP002042">
    <property type="protein sequence ID" value="BAB01415.1"/>
    <property type="status" value="JOINED"/>
    <property type="molecule type" value="Genomic_DNA"/>
</dbReference>
<dbReference type="EMBL" id="CP002686">
    <property type="protein sequence ID" value="AEE75313.1"/>
    <property type="molecule type" value="Genomic_DNA"/>
</dbReference>
<dbReference type="EMBL" id="AY063883">
    <property type="protein sequence ID" value="AAL36239.1"/>
    <property type="molecule type" value="mRNA"/>
</dbReference>
<dbReference type="EMBL" id="AY142588">
    <property type="protein sequence ID" value="AAN13157.1"/>
    <property type="molecule type" value="mRNA"/>
</dbReference>
<dbReference type="EMBL" id="AF344829">
    <property type="protein sequence ID" value="AAO48724.1"/>
    <property type="molecule type" value="mRNA"/>
</dbReference>
<dbReference type="RefSeq" id="NP_187929.4">
    <property type="nucleotide sequence ID" value="NM_112163.6"/>
</dbReference>
<dbReference type="FunCoup" id="Q8VZS6">
    <property type="interactions" value="1028"/>
</dbReference>
<dbReference type="IntAct" id="Q8VZS6">
    <property type="interactions" value="17"/>
</dbReference>
<dbReference type="STRING" id="3702.Q8VZS6"/>
<dbReference type="GlyGen" id="Q8VZS6">
    <property type="glycosylation" value="1 site, 1 O-linked glycan (1 site)"/>
</dbReference>
<dbReference type="iPTMnet" id="Q8VZS6"/>
<dbReference type="PaxDb" id="3702-AT3G13222.1"/>
<dbReference type="ProteomicsDB" id="220766"/>
<dbReference type="EnsemblPlants" id="AT3G13222.1">
    <property type="protein sequence ID" value="AT3G13222.1"/>
    <property type="gene ID" value="AT3G13222"/>
</dbReference>
<dbReference type="GeneID" id="820513"/>
<dbReference type="Gramene" id="AT3G13222.1">
    <property type="protein sequence ID" value="AT3G13222.1"/>
    <property type="gene ID" value="AT3G13222"/>
</dbReference>
<dbReference type="KEGG" id="ath:AT3G13222"/>
<dbReference type="Araport" id="AT3G13222"/>
<dbReference type="TAIR" id="AT3G13222">
    <property type="gene designation" value="GIP1"/>
</dbReference>
<dbReference type="eggNOG" id="ENOG502RQC4">
    <property type="taxonomic scope" value="Eukaryota"/>
</dbReference>
<dbReference type="HOGENOM" id="CLU_482657_0_0_1"/>
<dbReference type="InParanoid" id="Q8VZS6"/>
<dbReference type="OMA" id="THQAANC"/>
<dbReference type="OrthoDB" id="753279at2759"/>
<dbReference type="PhylomeDB" id="Q8VZS6"/>
<dbReference type="PRO" id="PR:Q8VZS6"/>
<dbReference type="Proteomes" id="UP000006548">
    <property type="component" value="Chromosome 3"/>
</dbReference>
<dbReference type="ExpressionAtlas" id="Q8VZS6">
    <property type="expression patterns" value="baseline and differential"/>
</dbReference>
<dbReference type="GO" id="GO:0005634">
    <property type="term" value="C:nucleus"/>
    <property type="evidence" value="ECO:0000314"/>
    <property type="project" value="TAIR"/>
</dbReference>
<dbReference type="GO" id="GO:0042802">
    <property type="term" value="F:identical protein binding"/>
    <property type="evidence" value="ECO:0000353"/>
    <property type="project" value="UniProtKB"/>
</dbReference>
<dbReference type="GO" id="GO:0051082">
    <property type="term" value="F:unfolded protein binding"/>
    <property type="evidence" value="ECO:0000314"/>
    <property type="project" value="TAIR"/>
</dbReference>
<dbReference type="GO" id="GO:0043388">
    <property type="term" value="P:positive regulation of DNA binding"/>
    <property type="evidence" value="ECO:0000314"/>
    <property type="project" value="TAIR"/>
</dbReference>
<dbReference type="InterPro" id="IPR044277">
    <property type="entry name" value="GIP1"/>
</dbReference>
<dbReference type="InterPro" id="IPR009719">
    <property type="entry name" value="GIP1_N"/>
</dbReference>
<dbReference type="InterPro" id="IPR009060">
    <property type="entry name" value="UBA-like_sf"/>
</dbReference>
<dbReference type="PANTHER" id="PTHR46775">
    <property type="entry name" value="FLOCCULATION PROTEIN (DUF1296)"/>
    <property type="match status" value="1"/>
</dbReference>
<dbReference type="PANTHER" id="PTHR46775:SF5">
    <property type="entry name" value="GBF-INTERACTING PROTEIN 1"/>
    <property type="match status" value="1"/>
</dbReference>
<dbReference type="Pfam" id="PF06972">
    <property type="entry name" value="GIP1_N"/>
    <property type="match status" value="1"/>
</dbReference>
<dbReference type="SUPFAM" id="SSF46934">
    <property type="entry name" value="UBA-like"/>
    <property type="match status" value="1"/>
</dbReference>
<comment type="function">
    <text evidence="2 3 4">Plant specific protein that enhances G-box-binding factor (GBF) DNA binding activity. May function as a nuclear chaperone or lever and regulate the multimeric state of GBFs. May contribute to bZIP-mediated gene regulation. Is able to refold denatured rhodanese in vitro (PubMed:16117846, PubMed:25387999). Reduces DNA-binding activity of BZIP16, BZIP68 and GBF1 under non-reducing conditions through direct physical interaction. Acts as a negative co-regulator in red and blue light-mediated hypocotyl elongation. Functions to promote hypocotyl elongation during the early stages of seedling development by regulating the repression effect by BZIP16 and the activation effect by BZIP68 and GBF1 on LHCB2.4 expression (PubMed:25387999). Enhances transcriptional activity of LBD18 in the EXP14 promoter. May act as a transcriptional coactivator of LBD18 (PubMed:24484953).</text>
</comment>
<comment type="subunit">
    <text evidence="3 4">Monomer, homodimer, homooligomer. Under non-reducing conditions, predominantly present in high molecular weight forms, but predominates in low molecular weight monomers under reducing conditions (PubMed:25387999). Interacts with BZIP16, BZIP68 and GBF1 (PubMed:25387999). Interacts with LBD18 (PubMed:24484953).</text>
</comment>
<comment type="subcellular location">
    <subcellularLocation>
        <location evidence="2 3 4">Nucleus</location>
    </subcellularLocation>
</comment>
<comment type="tissue specificity">
    <text evidence="3">Expressed in roots, leaves, stems and flowers.</text>
</comment>
<comment type="similarity">
    <text>Belongs to the GIP1 family.</text>
</comment>
<comment type="sequence caution" evidence="6">
    <conflict type="erroneous gene model prediction">
        <sequence resource="EMBL-CDS" id="BAB01415"/>
    </conflict>
</comment>
<sequence>MSRISGDGGSRVSIPADLLQTIQNIREVTGKQHSDEDIFSVFKECFSDPHETTQKLLYLDTFHEVRSKRERKKENLVPNTQGRGRTGRKNFASSYTDASNGRSAAFKKQSGANHIIGGSGTASSAPNNARNDTKPSSIMAPNPISLPSGISNQKIQDAIISPVDKVDTEEQPLSKATSSSKDVVEPDKSKESSVSVAVSDSVVENDTQYAVVETFQIPQQSERVIKSEVAASKCKNESLLKSDVGERPHVTFPVHIQVAKMLENGLTFGSFDSNFVREASSDKFTIGCDDSNIESSHGTAASARKDISTFSQDKNHEISNSAAQNELTLQPDQTVLPEEGSEGDKVKNEVLPITDTHQAAKCDAPPISYPDQYSLAAAQQAMHLYRQQYSLNYFPYGPYFPPYYMPQPYIHQYLSPNGFQQQSYLPPGDDAPAPPGAELPLTHIKPGSDIGNSPPTTIPFSYTSYAFNHIPSAATINATHKEEKKENMYTTGPLSLANLQASPMYNLSLQGQPIAFPTMQAGIRGLYQQTQPILAPLSISARTEPIGPSHVTNQQPQAARTNLGNNY</sequence>
<gene>
    <name evidence="5" type="primary">GIP1</name>
    <name evidence="7" type="ordered locus">At3g13222</name>
</gene>
<proteinExistence type="evidence at protein level"/>
<reference key="1">
    <citation type="journal article" date="2000" name="DNA Res.">
        <title>Structural analysis of Arabidopsis thaliana chromosome 3. II. Sequence features of the 4,251,695 bp regions covered by 90 P1, TAC and BAC clones.</title>
        <authorList>
            <person name="Kaneko T."/>
            <person name="Katoh T."/>
            <person name="Sato S."/>
            <person name="Nakamura Y."/>
            <person name="Asamizu E."/>
            <person name="Tabata S."/>
        </authorList>
    </citation>
    <scope>NUCLEOTIDE SEQUENCE [LARGE SCALE GENOMIC DNA]</scope>
    <source>
        <strain>cv. Columbia</strain>
    </source>
</reference>
<reference key="2">
    <citation type="journal article" date="2017" name="Plant J.">
        <title>Araport11: a complete reannotation of the Arabidopsis thaliana reference genome.</title>
        <authorList>
            <person name="Cheng C.Y."/>
            <person name="Krishnakumar V."/>
            <person name="Chan A.P."/>
            <person name="Thibaud-Nissen F."/>
            <person name="Schobel S."/>
            <person name="Town C.D."/>
        </authorList>
    </citation>
    <scope>GENOME REANNOTATION</scope>
    <source>
        <strain>cv. Columbia</strain>
    </source>
</reference>
<reference key="3">
    <citation type="journal article" date="2003" name="Science">
        <title>Empirical analysis of transcriptional activity in the Arabidopsis genome.</title>
        <authorList>
            <person name="Yamada K."/>
            <person name="Lim J."/>
            <person name="Dale J.M."/>
            <person name="Chen H."/>
            <person name="Shinn P."/>
            <person name="Palm C.J."/>
            <person name="Southwick A.M."/>
            <person name="Wu H.C."/>
            <person name="Kim C.J."/>
            <person name="Nguyen M."/>
            <person name="Pham P.K."/>
            <person name="Cheuk R.F."/>
            <person name="Karlin-Newmann G."/>
            <person name="Liu S.X."/>
            <person name="Lam B."/>
            <person name="Sakano H."/>
            <person name="Wu T."/>
            <person name="Yu G."/>
            <person name="Miranda M."/>
            <person name="Quach H.L."/>
            <person name="Tripp M."/>
            <person name="Chang C.H."/>
            <person name="Lee J.M."/>
            <person name="Toriumi M.J."/>
            <person name="Chan M.M."/>
            <person name="Tang C.C."/>
            <person name="Onodera C.S."/>
            <person name="Deng J.M."/>
            <person name="Akiyama K."/>
            <person name="Ansari Y."/>
            <person name="Arakawa T."/>
            <person name="Banh J."/>
            <person name="Banno F."/>
            <person name="Bowser L."/>
            <person name="Brooks S.Y."/>
            <person name="Carninci P."/>
            <person name="Chao Q."/>
            <person name="Choy N."/>
            <person name="Enju A."/>
            <person name="Goldsmith A.D."/>
            <person name="Gurjal M."/>
            <person name="Hansen N.F."/>
            <person name="Hayashizaki Y."/>
            <person name="Johnson-Hopson C."/>
            <person name="Hsuan V.W."/>
            <person name="Iida K."/>
            <person name="Karnes M."/>
            <person name="Khan S."/>
            <person name="Koesema E."/>
            <person name="Ishida J."/>
            <person name="Jiang P.X."/>
            <person name="Jones T."/>
            <person name="Kawai J."/>
            <person name="Kamiya A."/>
            <person name="Meyers C."/>
            <person name="Nakajima M."/>
            <person name="Narusaka M."/>
            <person name="Seki M."/>
            <person name="Sakurai T."/>
            <person name="Satou M."/>
            <person name="Tamse R."/>
            <person name="Vaysberg M."/>
            <person name="Wallender E.K."/>
            <person name="Wong C."/>
            <person name="Yamamura Y."/>
            <person name="Yuan S."/>
            <person name="Shinozaki K."/>
            <person name="Davis R.W."/>
            <person name="Theologis A."/>
            <person name="Ecker J.R."/>
        </authorList>
    </citation>
    <scope>NUCLEOTIDE SEQUENCE [LARGE SCALE MRNA]</scope>
    <source>
        <strain>cv. Columbia</strain>
    </source>
</reference>
<reference key="4">
    <citation type="journal article" date="2005" name="Cell Res.">
        <title>Identification and characterization of GIP1, an Arabidopsis thaliana protein that enhances the DNA binding affinity and reduces the oligomeric state of G-box binding factors.</title>
        <authorList>
            <person name="Sehnke P.C."/>
            <person name="Laughner B.J."/>
            <person name="Lyerly Linebarger C.R."/>
            <person name="Gurley W.B."/>
            <person name="Ferl R.J."/>
        </authorList>
    </citation>
    <scope>NUCLEOTIDE SEQUENCE [MRNA] OF 75-567</scope>
    <scope>FUNCTION</scope>
    <scope>INTERACTION WITH GBF1</scope>
    <scope>SUBCELLULAR LOCATION</scope>
</reference>
<reference key="5">
    <citation type="journal article" date="2014" name="J. Plant Physiol.">
        <title>GIP1 may act as a coactivator that enhances transcriptional activity of LBD18 in Arabidopsis.</title>
        <authorList>
            <person name="Lee H.W."/>
            <person name="Park J.H."/>
            <person name="Park M.Y."/>
            <person name="Kim J."/>
        </authorList>
    </citation>
    <scope>FUNCTION</scope>
    <scope>INTERACTION WITH LBD18</scope>
    <scope>SUBCELLULAR LOCATION</scope>
    <scope>TISSUE SPECIFICITY</scope>
</reference>
<reference key="6">
    <citation type="journal article" date="2015" name="Protoplasma">
        <title>GIP1 protein is a novel cofactor that regulates DNA-binding affinity of redox-regulated members of bZIP transcription factors involved in the early stages of Arabidopsis development.</title>
        <authorList>
            <person name="Shaikhali J."/>
        </authorList>
    </citation>
    <scope>FUNCTION</scope>
    <scope>SUBUNIT</scope>
    <scope>INTERACTION WITH BZIP16; BZIP68 AND GBF1</scope>
    <scope>SUBCELLULAR LOCATION</scope>
</reference>
<protein>
    <recommendedName>
        <fullName evidence="5">GBF-interacting protein 1</fullName>
    </recommendedName>
</protein>